<dbReference type="EMBL" id="AK058077">
    <property type="protein sequence ID" value="BAB71652.1"/>
    <property type="status" value="ALT_INIT"/>
    <property type="molecule type" value="mRNA"/>
</dbReference>
<dbReference type="EMBL" id="AK091016">
    <property type="protein sequence ID" value="BAC03567.1"/>
    <property type="molecule type" value="mRNA"/>
</dbReference>
<dbReference type="EMBL" id="AK096192">
    <property type="protein sequence ID" value="BAC04722.1"/>
    <property type="molecule type" value="mRNA"/>
</dbReference>
<dbReference type="EMBL" id="AK097227">
    <property type="protein sequence ID" value="BAC04981.1"/>
    <property type="status" value="ALT_INIT"/>
    <property type="molecule type" value="mRNA"/>
</dbReference>
<dbReference type="EMBL" id="AK131447">
    <property type="protein sequence ID" value="BAD18592.1"/>
    <property type="molecule type" value="mRNA"/>
</dbReference>
<dbReference type="EMBL" id="AL354919">
    <property type="status" value="NOT_ANNOTATED_CDS"/>
    <property type="molecule type" value="Genomic_DNA"/>
</dbReference>
<dbReference type="EMBL" id="BC039870">
    <property type="protein sequence ID" value="AAH39870.1"/>
    <property type="status" value="ALT_INIT"/>
    <property type="molecule type" value="mRNA"/>
</dbReference>
<dbReference type="EMBL" id="BC114430">
    <property type="protein sequence ID" value="AAI14431.1"/>
    <property type="molecule type" value="mRNA"/>
</dbReference>
<dbReference type="CCDS" id="CCDS347.1">
    <molecule id="Q6ZMY3-1"/>
</dbReference>
<dbReference type="CCDS" id="CCDS60066.1">
    <molecule id="Q6ZMY3-2"/>
</dbReference>
<dbReference type="CCDS" id="CCDS72748.1">
    <molecule id="Q6ZMY3-3"/>
</dbReference>
<dbReference type="RefSeq" id="NP_001268916.1">
    <molecule id="Q6ZMY3-2"/>
    <property type="nucleotide sequence ID" value="NM_001281987.3"/>
</dbReference>
<dbReference type="RefSeq" id="NP_001268917.1">
    <molecule id="Q6ZMY3-3"/>
    <property type="nucleotide sequence ID" value="NM_001281988.3"/>
</dbReference>
<dbReference type="RefSeq" id="NP_653170.3">
    <molecule id="Q6ZMY3-1"/>
    <property type="nucleotide sequence ID" value="NM_144569.5"/>
</dbReference>
<dbReference type="RefSeq" id="XP_011540715.1">
    <molecule id="Q6ZMY3-3"/>
    <property type="nucleotide sequence ID" value="XM_011542413.3"/>
</dbReference>
<dbReference type="RefSeq" id="XP_011540716.1">
    <property type="nucleotide sequence ID" value="XM_011542414.2"/>
</dbReference>
<dbReference type="RefSeq" id="XP_054195506.1">
    <molecule id="Q6ZMY3-3"/>
    <property type="nucleotide sequence ID" value="XM_054339531.1"/>
</dbReference>
<dbReference type="SMR" id="Q6ZMY3"/>
<dbReference type="BioGRID" id="124772">
    <property type="interactions" value="4"/>
</dbReference>
<dbReference type="FunCoup" id="Q6ZMY3">
    <property type="interactions" value="463"/>
</dbReference>
<dbReference type="IntAct" id="Q6ZMY3">
    <property type="interactions" value="2"/>
</dbReference>
<dbReference type="STRING" id="9606.ENSP00000353670"/>
<dbReference type="iPTMnet" id="Q6ZMY3"/>
<dbReference type="PhosphoSitePlus" id="Q6ZMY3"/>
<dbReference type="BioMuta" id="SPOCD1"/>
<dbReference type="DMDM" id="74749560"/>
<dbReference type="jPOST" id="Q6ZMY3"/>
<dbReference type="MassIVE" id="Q6ZMY3"/>
<dbReference type="PaxDb" id="9606-ENSP00000353670"/>
<dbReference type="PeptideAtlas" id="Q6ZMY3"/>
<dbReference type="ProteomicsDB" id="67931">
    <molecule id="Q6ZMY3-1"/>
</dbReference>
<dbReference type="ProteomicsDB" id="67932">
    <molecule id="Q6ZMY3-2"/>
</dbReference>
<dbReference type="ProteomicsDB" id="67933">
    <molecule id="Q6ZMY3-3"/>
</dbReference>
<dbReference type="ProteomicsDB" id="67935">
    <molecule id="Q6ZMY3-5"/>
</dbReference>
<dbReference type="Antibodypedia" id="31194">
    <property type="antibodies" value="22 antibodies from 11 providers"/>
</dbReference>
<dbReference type="DNASU" id="90853"/>
<dbReference type="Ensembl" id="ENST00000257100.7">
    <molecule id="Q6ZMY3-3"/>
    <property type="protein sequence ID" value="ENSP00000257100.3"/>
    <property type="gene ID" value="ENSG00000134668.13"/>
</dbReference>
<dbReference type="Ensembl" id="ENST00000360482.7">
    <molecule id="Q6ZMY3-1"/>
    <property type="protein sequence ID" value="ENSP00000353670.2"/>
    <property type="gene ID" value="ENSG00000134668.13"/>
</dbReference>
<dbReference type="Ensembl" id="ENST00000533231.5">
    <molecule id="Q6ZMY3-2"/>
    <property type="protein sequence ID" value="ENSP00000435851.1"/>
    <property type="gene ID" value="ENSG00000134668.13"/>
</dbReference>
<dbReference type="GeneID" id="90853"/>
<dbReference type="KEGG" id="hsa:90853"/>
<dbReference type="MANE-Select" id="ENST00000360482.7">
    <property type="protein sequence ID" value="ENSP00000353670.2"/>
    <property type="RefSeq nucleotide sequence ID" value="NM_144569.7"/>
    <property type="RefSeq protein sequence ID" value="NP_653170.3"/>
</dbReference>
<dbReference type="UCSC" id="uc001bts.3">
    <molecule id="Q6ZMY3-1"/>
    <property type="organism name" value="human"/>
</dbReference>
<dbReference type="AGR" id="HGNC:26338"/>
<dbReference type="CTD" id="90853"/>
<dbReference type="DisGeNET" id="90853"/>
<dbReference type="GeneCards" id="SPOCD1"/>
<dbReference type="HGNC" id="HGNC:26338">
    <property type="gene designation" value="SPOCD1"/>
</dbReference>
<dbReference type="HPA" id="ENSG00000134668">
    <property type="expression patterns" value="Tissue enhanced (choroid plexus, testis, urinary bladder)"/>
</dbReference>
<dbReference type="MIM" id="619038">
    <property type="type" value="gene"/>
</dbReference>
<dbReference type="neXtProt" id="NX_Q6ZMY3"/>
<dbReference type="OpenTargets" id="ENSG00000134668"/>
<dbReference type="PharmGKB" id="PA134930231"/>
<dbReference type="VEuPathDB" id="HostDB:ENSG00000134668"/>
<dbReference type="eggNOG" id="KOG1634">
    <property type="taxonomic scope" value="Eukaryota"/>
</dbReference>
<dbReference type="GeneTree" id="ENSGT00940000162194"/>
<dbReference type="HOGENOM" id="CLU_029996_0_0_1"/>
<dbReference type="InParanoid" id="Q6ZMY3"/>
<dbReference type="OMA" id="HGDVTPH"/>
<dbReference type="OrthoDB" id="1884872at2759"/>
<dbReference type="PAN-GO" id="Q6ZMY3">
    <property type="GO annotations" value="2 GO annotations based on evolutionary models"/>
</dbReference>
<dbReference type="PhylomeDB" id="Q6ZMY3"/>
<dbReference type="TreeFam" id="TF350578"/>
<dbReference type="PathwayCommons" id="Q6ZMY3"/>
<dbReference type="Reactome" id="R-HSA-9845323">
    <property type="pathway name" value="Regulation of endogenous retroelements by Piwi-interacting RNAs (piRNAs)"/>
</dbReference>
<dbReference type="SignaLink" id="Q6ZMY3"/>
<dbReference type="BioGRID-ORCS" id="90853">
    <property type="hits" value="16 hits in 1145 CRISPR screens"/>
</dbReference>
<dbReference type="ChiTaRS" id="SPOCD1">
    <property type="organism name" value="human"/>
</dbReference>
<dbReference type="GenomeRNAi" id="90853"/>
<dbReference type="Pharos" id="Q6ZMY3">
    <property type="development level" value="Tdark"/>
</dbReference>
<dbReference type="PRO" id="PR:Q6ZMY3"/>
<dbReference type="Proteomes" id="UP000005640">
    <property type="component" value="Chromosome 1"/>
</dbReference>
<dbReference type="RNAct" id="Q6ZMY3">
    <property type="molecule type" value="protein"/>
</dbReference>
<dbReference type="Bgee" id="ENSG00000134668">
    <property type="expression patterns" value="Expressed in stromal cell of endometrium and 124 other cell types or tissues"/>
</dbReference>
<dbReference type="ExpressionAtlas" id="Q6ZMY3">
    <property type="expression patterns" value="baseline and differential"/>
</dbReference>
<dbReference type="GO" id="GO:0005694">
    <property type="term" value="C:chromosome"/>
    <property type="evidence" value="ECO:0007669"/>
    <property type="project" value="UniProtKB-SubCell"/>
</dbReference>
<dbReference type="GO" id="GO:0005634">
    <property type="term" value="C:nucleus"/>
    <property type="evidence" value="ECO:0000250"/>
    <property type="project" value="UniProtKB"/>
</dbReference>
<dbReference type="GO" id="GO:0030674">
    <property type="term" value="F:protein-macromolecule adaptor activity"/>
    <property type="evidence" value="ECO:0000250"/>
    <property type="project" value="UniProtKB"/>
</dbReference>
<dbReference type="GO" id="GO:0030154">
    <property type="term" value="P:cell differentiation"/>
    <property type="evidence" value="ECO:0007669"/>
    <property type="project" value="UniProtKB-KW"/>
</dbReference>
<dbReference type="GO" id="GO:0006351">
    <property type="term" value="P:DNA-templated transcription"/>
    <property type="evidence" value="ECO:0007669"/>
    <property type="project" value="InterPro"/>
</dbReference>
<dbReference type="GO" id="GO:0006357">
    <property type="term" value="P:regulation of transcription by RNA polymerase II"/>
    <property type="evidence" value="ECO:0000318"/>
    <property type="project" value="GO_Central"/>
</dbReference>
<dbReference type="GO" id="GO:0007283">
    <property type="term" value="P:spermatogenesis"/>
    <property type="evidence" value="ECO:0000250"/>
    <property type="project" value="UniProtKB"/>
</dbReference>
<dbReference type="GO" id="GO:0141196">
    <property type="term" value="P:transposable element silencing by piRNA-mediated DNA methylation"/>
    <property type="evidence" value="ECO:0000250"/>
    <property type="project" value="UniProtKB"/>
</dbReference>
<dbReference type="GO" id="GO:0141006">
    <property type="term" value="P:transposable element silencing by piRNA-mediated heterochromatin formation"/>
    <property type="evidence" value="ECO:0000250"/>
    <property type="project" value="UniProtKB"/>
</dbReference>
<dbReference type="CDD" id="cd21540">
    <property type="entry name" value="SPOC_SPOCD1"/>
    <property type="match status" value="1"/>
</dbReference>
<dbReference type="FunFam" id="1.10.472.30:FF:000004">
    <property type="entry name" value="SPOC domain containing 1"/>
    <property type="match status" value="1"/>
</dbReference>
<dbReference type="Gene3D" id="1.10.472.30">
    <property type="entry name" value="Transcription elongation factor S-II, central domain"/>
    <property type="match status" value="1"/>
</dbReference>
<dbReference type="InterPro" id="IPR012921">
    <property type="entry name" value="SPOC_C"/>
</dbReference>
<dbReference type="InterPro" id="IPR003618">
    <property type="entry name" value="TFIIS_cen_dom"/>
</dbReference>
<dbReference type="InterPro" id="IPR036575">
    <property type="entry name" value="TFIIS_cen_dom_sf"/>
</dbReference>
<dbReference type="PANTHER" id="PTHR11477:SF18">
    <property type="entry name" value="SPOC DOMAIN-CONTAINING PROTEIN 1"/>
    <property type="match status" value="1"/>
</dbReference>
<dbReference type="PANTHER" id="PTHR11477">
    <property type="entry name" value="TRANSCRIPTION FACTOR S-II ZINC FINGER DOMAIN-CONTAINING PROTEIN"/>
    <property type="match status" value="1"/>
</dbReference>
<dbReference type="Pfam" id="PF07744">
    <property type="entry name" value="SPOC"/>
    <property type="match status" value="1"/>
</dbReference>
<dbReference type="Pfam" id="PF07500">
    <property type="entry name" value="TFIIS_M"/>
    <property type="match status" value="1"/>
</dbReference>
<dbReference type="SMART" id="SM00510">
    <property type="entry name" value="TFS2M"/>
    <property type="match status" value="1"/>
</dbReference>
<dbReference type="SUPFAM" id="SSF46942">
    <property type="entry name" value="Elongation factor TFIIS domain 2"/>
    <property type="match status" value="1"/>
</dbReference>
<dbReference type="PROSITE" id="PS51321">
    <property type="entry name" value="TFIIS_CENTRAL"/>
    <property type="match status" value="1"/>
</dbReference>
<sequence length="1216" mass="130027">MSQAGDVEGPSTGDPVLSPQHNCELLQNMEGASSMPGLSPDGPGASSGPGVRAGSRRKIPRKEALRGGSSRAAGAAEVRPGVLELLAVVQSRGSMLAPGLHMQLPSVPTQGRALTSKRLQVSLCDILDDSCPRKLCSRSAGLPERALACRERLAGVEEVSCLRPREARDGGMSSPGCDRRSPTLSKEEPPGRPLTSSPDPVPVRVRKKWRRQGAHSECEEGAGDFLWLDQSPRGDNLLSVGDPPQVADLESLGGPCRPPSPKDTGSGPGEPGGSGAGCASGTEKFGYLPATGDGPQPGSPCGPVGFPVPSGGESLSSAAQAPPQSAALCLGASAQASAEQQEAVCVVRTGSDEGQAPAQDQEELEAKAQPASRGRLEQGLAAPADTCASSREPLGGLSSSLDTEASRACSGPFMEQRRSKGTKNLKKGPVPCAQDRGTDRSSDNSHQDRPEEPSPGGCPRLEEVKIPHGVKLVCYLGSGPVIQLLGAISHGQAGGQLPPKLEVLEDLMEVSSPSPAQRLRRKKRPMVQGPAGCQVFQPSPSGGTAGDPGGLSDPFYPPRSGSLALGDPSSDPACSQSGPMEAEEDSLPEQPEDSAQLQQEKPSLYIGVRGTVVRSMQEVLWTRLRELPDPVLSEEVVEGIAAGIEAALWDLTQGTNGRYKTKYRSLLFNLRDPRNLDLFLKVVHGDVTPYDLVRMSSMQLAPQELARWRDQEEKRGLNIIEQQQKEPCRLPASKMTHKGEVEIQRDMDQTLTLEDLVGPQMFMDCSPQALPIASEDTTGQHDHHFLDPNCHICKDWEPSNELLGSFEAAKSCGDNIFQKALSQTPMPAPEMPKTRELSPTEPQDRVPPSGLHVPAAPTKALPCLPPWEGVLDMFSIKRFRARAQLVSGHSCRLVQALPTVIRSAGCIPSNIVWDLLASICPAKAKDVCVVRLCPHGARDTQNCRLLYSYLNDRQRHGLASVEHMGMVLLPLPAFQPLPTRLRPLGGPGLWALPVSPLLSPGLEVTHSSLLLAVLLPKEGLPDTAGSSPWLGKVQKMVSFNSKVEKRYYQPDDRRPNVPLKGTPPPGGAWQQSQGRGSIAPRGISAWQRPPRGRGRLWPEPENWQHPGRGQWPPEPGLRQSQHPYSVAPAGHGFGRGQHFHRDSCPHQALLRHLESLATMSHQLQALLCPQTKSSIPRPLQRLSSALAAPEPPGPARDSSLGPTDEAGSECPFPRKA</sequence>
<gene>
    <name evidence="9 11" type="primary">SPOCD1</name>
</gene>
<feature type="chain" id="PRO_0000287472" description="SPOC domain-containing protein 1">
    <location>
        <begin position="1"/>
        <end position="1216"/>
    </location>
</feature>
<feature type="domain" description="TFIIS central" evidence="2">
    <location>
        <begin position="608"/>
        <end position="728"/>
    </location>
</feature>
<feature type="domain" description="SPOC">
    <location>
        <begin position="867"/>
        <end position="970"/>
    </location>
</feature>
<feature type="region of interest" description="Disordered" evidence="3">
    <location>
        <begin position="1"/>
        <end position="74"/>
    </location>
</feature>
<feature type="region of interest" description="Disordered" evidence="3">
    <location>
        <begin position="166"/>
        <end position="216"/>
    </location>
</feature>
<feature type="region of interest" description="Disordered" evidence="3">
    <location>
        <begin position="236"/>
        <end position="325"/>
    </location>
</feature>
<feature type="region of interest" description="Disordered" evidence="3">
    <location>
        <begin position="348"/>
        <end position="462"/>
    </location>
</feature>
<feature type="region of interest" description="Disordered" evidence="3">
    <location>
        <begin position="511"/>
        <end position="601"/>
    </location>
</feature>
<feature type="region of interest" description="Disordered" evidence="3">
    <location>
        <begin position="823"/>
        <end position="850"/>
    </location>
</feature>
<feature type="region of interest" description="Disordered" evidence="3">
    <location>
        <begin position="1046"/>
        <end position="1140"/>
    </location>
</feature>
<feature type="region of interest" description="Disordered" evidence="3">
    <location>
        <begin position="1176"/>
        <end position="1216"/>
    </location>
</feature>
<feature type="compositionally biased region" description="Low complexity" evidence="3">
    <location>
        <begin position="36"/>
        <end position="50"/>
    </location>
</feature>
<feature type="compositionally biased region" description="Basic and acidic residues" evidence="3">
    <location>
        <begin position="177"/>
        <end position="190"/>
    </location>
</feature>
<feature type="compositionally biased region" description="Basic residues" evidence="3">
    <location>
        <begin position="204"/>
        <end position="213"/>
    </location>
</feature>
<feature type="compositionally biased region" description="Gly residues" evidence="3">
    <location>
        <begin position="266"/>
        <end position="278"/>
    </location>
</feature>
<feature type="compositionally biased region" description="Low complexity" evidence="3">
    <location>
        <begin position="314"/>
        <end position="325"/>
    </location>
</feature>
<feature type="compositionally biased region" description="Basic and acidic residues" evidence="3">
    <location>
        <begin position="436"/>
        <end position="452"/>
    </location>
</feature>
<feature type="compositionally biased region" description="Acidic residues" evidence="3">
    <location>
        <begin position="581"/>
        <end position="592"/>
    </location>
</feature>
<feature type="compositionally biased region" description="Basic and acidic residues" evidence="3">
    <location>
        <begin position="832"/>
        <end position="844"/>
    </location>
</feature>
<feature type="compositionally biased region" description="Basic and acidic residues" evidence="3">
    <location>
        <begin position="1046"/>
        <end position="1055"/>
    </location>
</feature>
<feature type="splice variant" id="VSP_025489" description="In isoform 4." evidence="7">
    <location>
        <begin position="1"/>
        <end position="656"/>
    </location>
</feature>
<feature type="splice variant" id="VSP_025490" description="In isoform 3." evidence="7">
    <location>
        <begin position="1"/>
        <end position="507"/>
    </location>
</feature>
<feature type="splice variant" id="VSP_025491" description="In isoform 5." evidence="7">
    <location>
        <begin position="476"/>
        <end position="534"/>
    </location>
</feature>
<feature type="splice variant" id="VSP_025492" description="In isoform 5." evidence="7">
    <original>QLQQEKPS</original>
    <variation>FGSSRTQC</variation>
    <location>
        <begin position="596"/>
        <end position="603"/>
    </location>
</feature>
<feature type="splice variant" id="VSP_025493" description="In isoform 5." evidence="7">
    <location>
        <begin position="604"/>
        <end position="1216"/>
    </location>
</feature>
<feature type="splice variant" id="VSP_025494" description="In isoform 4." evidence="7">
    <original>GRYKTKYRSLLFNLRDPRNL</original>
    <variation>MLGWGSSFSVWCSPAPCPHQ</variation>
    <location>
        <begin position="657"/>
        <end position="676"/>
    </location>
</feature>
<feature type="splice variant" id="VSP_025495" description="In isoform 4." evidence="7">
    <original>GPQMFMDCSPQALPIASEDTTGQHDHHFLDP</original>
    <variation>VKLEPDLVLGRAHAWGSHASPHQQCGLGHVT</variation>
    <location>
        <begin position="758"/>
        <end position="788"/>
    </location>
</feature>
<feature type="splice variant" id="VSP_025496" description="In isoform 4." evidence="7">
    <location>
        <begin position="789"/>
        <end position="1216"/>
    </location>
</feature>
<feature type="splice variant" id="VSP_025497" description="In isoform 2 and isoform 3." evidence="7 8">
    <location>
        <begin position="987"/>
        <end position="999"/>
    </location>
</feature>
<feature type="sequence variant" id="VAR_051379" description="In dbSNP:rs6664445." evidence="4">
    <original>T</original>
    <variation>A</variation>
    <location>
        <position position="109"/>
    </location>
</feature>
<feature type="sequence variant" id="VAR_051380" description="In dbSNP:rs6669563.">
    <original>R</original>
    <variation>W</variation>
    <location>
        <position position="436"/>
    </location>
</feature>
<feature type="sequence variant" id="VAR_035660" description="In a breast cancer sample; somatic mutation; dbSNP:rs1165078436." evidence="5">
    <original>R</original>
    <variation>W</variation>
    <location>
        <position position="671"/>
    </location>
</feature>
<feature type="sequence variant" id="VAR_089993" description="Found in patients with spermatogenic failure; uncertain significance; dbSNP:rs1557814123." evidence="6">
    <original>L</original>
    <variation>R</variation>
    <location>
        <position position="971"/>
    </location>
</feature>
<feature type="sequence conflict" description="In Ref. 1; BAC04981." evidence="10" ref="1">
    <original>G</original>
    <variation>D</variation>
    <location>
        <position position="549"/>
    </location>
</feature>
<reference key="1">
    <citation type="journal article" date="2004" name="Nat. Genet.">
        <title>Complete sequencing and characterization of 21,243 full-length human cDNAs.</title>
        <authorList>
            <person name="Ota T."/>
            <person name="Suzuki Y."/>
            <person name="Nishikawa T."/>
            <person name="Otsuki T."/>
            <person name="Sugiyama T."/>
            <person name="Irie R."/>
            <person name="Wakamatsu A."/>
            <person name="Hayashi K."/>
            <person name="Sato H."/>
            <person name="Nagai K."/>
            <person name="Kimura K."/>
            <person name="Makita H."/>
            <person name="Sekine M."/>
            <person name="Obayashi M."/>
            <person name="Nishi T."/>
            <person name="Shibahara T."/>
            <person name="Tanaka T."/>
            <person name="Ishii S."/>
            <person name="Yamamoto J."/>
            <person name="Saito K."/>
            <person name="Kawai Y."/>
            <person name="Isono Y."/>
            <person name="Nakamura Y."/>
            <person name="Nagahari K."/>
            <person name="Murakami K."/>
            <person name="Yasuda T."/>
            <person name="Iwayanagi T."/>
            <person name="Wagatsuma M."/>
            <person name="Shiratori A."/>
            <person name="Sudo H."/>
            <person name="Hosoiri T."/>
            <person name="Kaku Y."/>
            <person name="Kodaira H."/>
            <person name="Kondo H."/>
            <person name="Sugawara M."/>
            <person name="Takahashi M."/>
            <person name="Kanda K."/>
            <person name="Yokoi T."/>
            <person name="Furuya T."/>
            <person name="Kikkawa E."/>
            <person name="Omura Y."/>
            <person name="Abe K."/>
            <person name="Kamihara K."/>
            <person name="Katsuta N."/>
            <person name="Sato K."/>
            <person name="Tanikawa M."/>
            <person name="Yamazaki M."/>
            <person name="Ninomiya K."/>
            <person name="Ishibashi T."/>
            <person name="Yamashita H."/>
            <person name="Murakawa K."/>
            <person name="Fujimori K."/>
            <person name="Tanai H."/>
            <person name="Kimata M."/>
            <person name="Watanabe M."/>
            <person name="Hiraoka S."/>
            <person name="Chiba Y."/>
            <person name="Ishida S."/>
            <person name="Ono Y."/>
            <person name="Takiguchi S."/>
            <person name="Watanabe S."/>
            <person name="Yosida M."/>
            <person name="Hotuta T."/>
            <person name="Kusano J."/>
            <person name="Kanehori K."/>
            <person name="Takahashi-Fujii A."/>
            <person name="Hara H."/>
            <person name="Tanase T.-O."/>
            <person name="Nomura Y."/>
            <person name="Togiya S."/>
            <person name="Komai F."/>
            <person name="Hara R."/>
            <person name="Takeuchi K."/>
            <person name="Arita M."/>
            <person name="Imose N."/>
            <person name="Musashino K."/>
            <person name="Yuuki H."/>
            <person name="Oshima A."/>
            <person name="Sasaki N."/>
            <person name="Aotsuka S."/>
            <person name="Yoshikawa Y."/>
            <person name="Matsunawa H."/>
            <person name="Ichihara T."/>
            <person name="Shiohata N."/>
            <person name="Sano S."/>
            <person name="Moriya S."/>
            <person name="Momiyama H."/>
            <person name="Satoh N."/>
            <person name="Takami S."/>
            <person name="Terashima Y."/>
            <person name="Suzuki O."/>
            <person name="Nakagawa S."/>
            <person name="Senoh A."/>
            <person name="Mizoguchi H."/>
            <person name="Goto Y."/>
            <person name="Shimizu F."/>
            <person name="Wakebe H."/>
            <person name="Hishigaki H."/>
            <person name="Watanabe T."/>
            <person name="Sugiyama A."/>
            <person name="Takemoto M."/>
            <person name="Kawakami B."/>
            <person name="Yamazaki M."/>
            <person name="Watanabe K."/>
            <person name="Kumagai A."/>
            <person name="Itakura S."/>
            <person name="Fukuzumi Y."/>
            <person name="Fujimori Y."/>
            <person name="Komiyama M."/>
            <person name="Tashiro H."/>
            <person name="Tanigami A."/>
            <person name="Fujiwara T."/>
            <person name="Ono T."/>
            <person name="Yamada K."/>
            <person name="Fujii Y."/>
            <person name="Ozaki K."/>
            <person name="Hirao M."/>
            <person name="Ohmori Y."/>
            <person name="Kawabata A."/>
            <person name="Hikiji T."/>
            <person name="Kobatake N."/>
            <person name="Inagaki H."/>
            <person name="Ikema Y."/>
            <person name="Okamoto S."/>
            <person name="Okitani R."/>
            <person name="Kawakami T."/>
            <person name="Noguchi S."/>
            <person name="Itoh T."/>
            <person name="Shigeta K."/>
            <person name="Senba T."/>
            <person name="Matsumura K."/>
            <person name="Nakajima Y."/>
            <person name="Mizuno T."/>
            <person name="Morinaga M."/>
            <person name="Sasaki M."/>
            <person name="Togashi T."/>
            <person name="Oyama M."/>
            <person name="Hata H."/>
            <person name="Watanabe M."/>
            <person name="Komatsu T."/>
            <person name="Mizushima-Sugano J."/>
            <person name="Satoh T."/>
            <person name="Shirai Y."/>
            <person name="Takahashi Y."/>
            <person name="Nakagawa K."/>
            <person name="Okumura K."/>
            <person name="Nagase T."/>
            <person name="Nomura N."/>
            <person name="Kikuchi H."/>
            <person name="Masuho Y."/>
            <person name="Yamashita R."/>
            <person name="Nakai K."/>
            <person name="Yada T."/>
            <person name="Nakamura Y."/>
            <person name="Ohara O."/>
            <person name="Isogai T."/>
            <person name="Sugano S."/>
        </authorList>
    </citation>
    <scope>NUCLEOTIDE SEQUENCE [LARGE SCALE MRNA] (ISOFORMS 1; 3 AND 4)</scope>
    <scope>NUCLEOTIDE SEQUENCE [LARGE SCALE MRNA] OF 403-1216 (ISOFORM 5)</scope>
    <source>
        <tissue>Brain</tissue>
        <tissue>Spleen</tissue>
        <tissue>Testis</tissue>
    </source>
</reference>
<reference key="2">
    <citation type="journal article" date="2006" name="Nature">
        <title>The DNA sequence and biological annotation of human chromosome 1.</title>
        <authorList>
            <person name="Gregory S.G."/>
            <person name="Barlow K.F."/>
            <person name="McLay K.E."/>
            <person name="Kaul R."/>
            <person name="Swarbreck D."/>
            <person name="Dunham A."/>
            <person name="Scott C.E."/>
            <person name="Howe K.L."/>
            <person name="Woodfine K."/>
            <person name="Spencer C.C.A."/>
            <person name="Jones M.C."/>
            <person name="Gillson C."/>
            <person name="Searle S."/>
            <person name="Zhou Y."/>
            <person name="Kokocinski F."/>
            <person name="McDonald L."/>
            <person name="Evans R."/>
            <person name="Phillips K."/>
            <person name="Atkinson A."/>
            <person name="Cooper R."/>
            <person name="Jones C."/>
            <person name="Hall R.E."/>
            <person name="Andrews T.D."/>
            <person name="Lloyd C."/>
            <person name="Ainscough R."/>
            <person name="Almeida J.P."/>
            <person name="Ambrose K.D."/>
            <person name="Anderson F."/>
            <person name="Andrew R.W."/>
            <person name="Ashwell R.I.S."/>
            <person name="Aubin K."/>
            <person name="Babbage A.K."/>
            <person name="Bagguley C.L."/>
            <person name="Bailey J."/>
            <person name="Beasley H."/>
            <person name="Bethel G."/>
            <person name="Bird C.P."/>
            <person name="Bray-Allen S."/>
            <person name="Brown J.Y."/>
            <person name="Brown A.J."/>
            <person name="Buckley D."/>
            <person name="Burton J."/>
            <person name="Bye J."/>
            <person name="Carder C."/>
            <person name="Chapman J.C."/>
            <person name="Clark S.Y."/>
            <person name="Clarke G."/>
            <person name="Clee C."/>
            <person name="Cobley V."/>
            <person name="Collier R.E."/>
            <person name="Corby N."/>
            <person name="Coville G.J."/>
            <person name="Davies J."/>
            <person name="Deadman R."/>
            <person name="Dunn M."/>
            <person name="Earthrowl M."/>
            <person name="Ellington A.G."/>
            <person name="Errington H."/>
            <person name="Frankish A."/>
            <person name="Frankland J."/>
            <person name="French L."/>
            <person name="Garner P."/>
            <person name="Garnett J."/>
            <person name="Gay L."/>
            <person name="Ghori M.R.J."/>
            <person name="Gibson R."/>
            <person name="Gilby L.M."/>
            <person name="Gillett W."/>
            <person name="Glithero R.J."/>
            <person name="Grafham D.V."/>
            <person name="Griffiths C."/>
            <person name="Griffiths-Jones S."/>
            <person name="Grocock R."/>
            <person name="Hammond S."/>
            <person name="Harrison E.S.I."/>
            <person name="Hart E."/>
            <person name="Haugen E."/>
            <person name="Heath P.D."/>
            <person name="Holmes S."/>
            <person name="Holt K."/>
            <person name="Howden P.J."/>
            <person name="Hunt A.R."/>
            <person name="Hunt S.E."/>
            <person name="Hunter G."/>
            <person name="Isherwood J."/>
            <person name="James R."/>
            <person name="Johnson C."/>
            <person name="Johnson D."/>
            <person name="Joy A."/>
            <person name="Kay M."/>
            <person name="Kershaw J.K."/>
            <person name="Kibukawa M."/>
            <person name="Kimberley A.M."/>
            <person name="King A."/>
            <person name="Knights A.J."/>
            <person name="Lad H."/>
            <person name="Laird G."/>
            <person name="Lawlor S."/>
            <person name="Leongamornlert D.A."/>
            <person name="Lloyd D.M."/>
            <person name="Loveland J."/>
            <person name="Lovell J."/>
            <person name="Lush M.J."/>
            <person name="Lyne R."/>
            <person name="Martin S."/>
            <person name="Mashreghi-Mohammadi M."/>
            <person name="Matthews L."/>
            <person name="Matthews N.S.W."/>
            <person name="McLaren S."/>
            <person name="Milne S."/>
            <person name="Mistry S."/>
            <person name="Moore M.J.F."/>
            <person name="Nickerson T."/>
            <person name="O'Dell C.N."/>
            <person name="Oliver K."/>
            <person name="Palmeiri A."/>
            <person name="Palmer S.A."/>
            <person name="Parker A."/>
            <person name="Patel D."/>
            <person name="Pearce A.V."/>
            <person name="Peck A.I."/>
            <person name="Pelan S."/>
            <person name="Phelps K."/>
            <person name="Phillimore B.J."/>
            <person name="Plumb R."/>
            <person name="Rajan J."/>
            <person name="Raymond C."/>
            <person name="Rouse G."/>
            <person name="Saenphimmachak C."/>
            <person name="Sehra H.K."/>
            <person name="Sheridan E."/>
            <person name="Shownkeen R."/>
            <person name="Sims S."/>
            <person name="Skuce C.D."/>
            <person name="Smith M."/>
            <person name="Steward C."/>
            <person name="Subramanian S."/>
            <person name="Sycamore N."/>
            <person name="Tracey A."/>
            <person name="Tromans A."/>
            <person name="Van Helmond Z."/>
            <person name="Wall M."/>
            <person name="Wallis J.M."/>
            <person name="White S."/>
            <person name="Whitehead S.L."/>
            <person name="Wilkinson J.E."/>
            <person name="Willey D.L."/>
            <person name="Williams H."/>
            <person name="Wilming L."/>
            <person name="Wray P.W."/>
            <person name="Wu Z."/>
            <person name="Coulson A."/>
            <person name="Vaudin M."/>
            <person name="Sulston J.E."/>
            <person name="Durbin R.M."/>
            <person name="Hubbard T."/>
            <person name="Wooster R."/>
            <person name="Dunham I."/>
            <person name="Carter N.P."/>
            <person name="McVean G."/>
            <person name="Ross M.T."/>
            <person name="Harrow J."/>
            <person name="Olson M.V."/>
            <person name="Beck S."/>
            <person name="Rogers J."/>
            <person name="Bentley D.R."/>
        </authorList>
    </citation>
    <scope>NUCLEOTIDE SEQUENCE [LARGE SCALE GENOMIC DNA]</scope>
</reference>
<reference key="3">
    <citation type="journal article" date="2004" name="Genome Res.">
        <title>The status, quality, and expansion of the NIH full-length cDNA project: the Mammalian Gene Collection (MGC).</title>
        <authorList>
            <consortium name="The MGC Project Team"/>
        </authorList>
    </citation>
    <scope>NUCLEOTIDE SEQUENCE [LARGE SCALE MRNA] (ISOFORM 2)</scope>
    <scope>VARIANT ALA-109</scope>
    <source>
        <tissue>Brain</tissue>
    </source>
</reference>
<reference key="4">
    <citation type="journal article" date="2024" name="Mol. Cell">
        <title>C19ORF84 connects piRNA and DNA methylation machineries to defend the mammalian germ line.</title>
        <authorList>
            <person name="Zoch A."/>
            <person name="Konieczny G."/>
            <person name="Auchynnikava T."/>
            <person name="Stallmeyer B."/>
            <person name="Rotte N."/>
            <person name="Heep M."/>
            <person name="Berrens R.V."/>
            <person name="Schito M."/>
            <person name="Kabayama Y."/>
            <person name="Schopp T."/>
            <person name="Kliesch S."/>
            <person name="Houston B."/>
            <person name="Nagirnaja L."/>
            <person name="O'Bryan M.K."/>
            <person name="Aston K.I."/>
            <person name="Conrad D.F."/>
            <person name="Rappsilber J."/>
            <person name="Allshire R.C."/>
            <person name="Cook A.G."/>
            <person name="Tuttelmann F."/>
            <person name="O'Carroll D."/>
        </authorList>
    </citation>
    <scope>FUNCTION</scope>
    <scope>INVOLVEMENT IN SPERMATOGENIC FAILURE</scope>
    <scope>VARIANT ARG-971</scope>
</reference>
<reference key="5">
    <citation type="journal article" date="2006" name="Science">
        <title>The consensus coding sequences of human breast and colorectal cancers.</title>
        <authorList>
            <person name="Sjoeblom T."/>
            <person name="Jones S."/>
            <person name="Wood L.D."/>
            <person name="Parsons D.W."/>
            <person name="Lin J."/>
            <person name="Barber T.D."/>
            <person name="Mandelker D."/>
            <person name="Leary R.J."/>
            <person name="Ptak J."/>
            <person name="Silliman N."/>
            <person name="Szabo S."/>
            <person name="Buckhaults P."/>
            <person name="Farrell C."/>
            <person name="Meeh P."/>
            <person name="Markowitz S.D."/>
            <person name="Willis J."/>
            <person name="Dawson D."/>
            <person name="Willson J.K.V."/>
            <person name="Gazdar A.F."/>
            <person name="Hartigan J."/>
            <person name="Wu L."/>
            <person name="Liu C."/>
            <person name="Parmigiani G."/>
            <person name="Park B.H."/>
            <person name="Bachman K.E."/>
            <person name="Papadopoulos N."/>
            <person name="Vogelstein B."/>
            <person name="Kinzler K.W."/>
            <person name="Velculescu V.E."/>
        </authorList>
    </citation>
    <scope>VARIANT [LARGE SCALE ANALYSIS] TRP-671</scope>
</reference>
<organism>
    <name type="scientific">Homo sapiens</name>
    <name type="common">Human</name>
    <dbReference type="NCBI Taxonomy" id="9606"/>
    <lineage>
        <taxon>Eukaryota</taxon>
        <taxon>Metazoa</taxon>
        <taxon>Chordata</taxon>
        <taxon>Craniata</taxon>
        <taxon>Vertebrata</taxon>
        <taxon>Euteleostomi</taxon>
        <taxon>Mammalia</taxon>
        <taxon>Eutheria</taxon>
        <taxon>Euarchontoglires</taxon>
        <taxon>Primates</taxon>
        <taxon>Haplorrhini</taxon>
        <taxon>Catarrhini</taxon>
        <taxon>Hominidae</taxon>
        <taxon>Homo</taxon>
    </lineage>
</organism>
<name>SPOC1_HUMAN</name>
<protein>
    <recommendedName>
        <fullName evidence="10">SPOC domain-containing protein 1</fullName>
    </recommendedName>
</protein>
<keyword id="KW-0025">Alternative splicing</keyword>
<keyword id="KW-0158">Chromosome</keyword>
<keyword id="KW-0221">Differentiation</keyword>
<keyword id="KW-0539">Nucleus</keyword>
<keyword id="KW-1267">Proteomics identification</keyword>
<keyword id="KW-1185">Reference proteome</keyword>
<keyword id="KW-0943">RNA-mediated gene silencing</keyword>
<keyword id="KW-0744">Spermatogenesis</keyword>
<proteinExistence type="evidence at protein level"/>
<evidence type="ECO:0000250" key="1">
    <source>
        <dbReference type="UniProtKB" id="B1ASB6"/>
    </source>
</evidence>
<evidence type="ECO:0000255" key="2">
    <source>
        <dbReference type="PROSITE-ProRule" id="PRU00651"/>
    </source>
</evidence>
<evidence type="ECO:0000256" key="3">
    <source>
        <dbReference type="SAM" id="MobiDB-lite"/>
    </source>
</evidence>
<evidence type="ECO:0000269" key="4">
    <source>
    </source>
</evidence>
<evidence type="ECO:0000269" key="5">
    <source>
    </source>
</evidence>
<evidence type="ECO:0000269" key="6">
    <source>
    </source>
</evidence>
<evidence type="ECO:0000303" key="7">
    <source>
    </source>
</evidence>
<evidence type="ECO:0000303" key="8">
    <source>
    </source>
</evidence>
<evidence type="ECO:0000303" key="9">
    <source>
    </source>
</evidence>
<evidence type="ECO:0000305" key="10"/>
<evidence type="ECO:0000312" key="11">
    <source>
        <dbReference type="HGNC" id="HGNC:26338"/>
    </source>
</evidence>
<accession>Q6ZMY3</accession>
<accession>Q24JU3</accession>
<accession>Q6PI90</accession>
<accession>Q8N869</accession>
<accession>Q8N8U0</accession>
<accession>Q8NBC6</accession>
<accession>Q96LN6</accession>
<comment type="function">
    <text evidence="1 6">Protein adapter that acts as an essential executor of PIWIL4-piRNA pathway directed transposon DNA methylation and silencing in the male embryonic germ cells (PubMed:38359823). Recruited to young transposons, which are specifically marked with histone H3 trimethylated at both 'Lys-4' and 'Lys-9' (H3K4me3K9me3), via its association with SPIN1 chromatin reader, and associates with the de novo DNA methylation machinery and repressive chromatin remodeling complexes (By similarity). Following this, PIWIL4 engages with nascent transposable element transcript to direct piRNA-directed DNA methylation. Not required for piRNA biosynthesis (By similarity).</text>
</comment>
<comment type="subunit">
    <text evidence="1 6">Interacts with DNMT3A, DNMT3C and DNMT3L (By similarity). Interacts with C19orf84 (PubMed:38359823). Interacts with SPIN1; promoting recruitment to transposons marked with histone H3 trimethylated at both 'Lys-4' and 'Lys-9' (H3K4me3K9me3) (By similarity).</text>
</comment>
<comment type="subcellular location">
    <subcellularLocation>
        <location evidence="1">Nucleus</location>
    </subcellularLocation>
    <subcellularLocation>
        <location evidence="1">Chromosome</location>
    </subcellularLocation>
</comment>
<comment type="alternative products">
    <event type="alternative splicing"/>
    <isoform>
        <id>Q6ZMY3-1</id>
        <name>1</name>
        <sequence type="displayed"/>
    </isoform>
    <isoform>
        <id>Q6ZMY3-2</id>
        <name>2</name>
        <sequence type="described" ref="VSP_025497"/>
    </isoform>
    <isoform>
        <id>Q6ZMY3-3</id>
        <name>3</name>
        <sequence type="described" ref="VSP_025490 VSP_025497"/>
    </isoform>
    <isoform>
        <id>Q6ZMY3-4</id>
        <name>4</name>
        <sequence type="described" ref="VSP_025489 VSP_025494 VSP_025495 VSP_025496"/>
    </isoform>
    <isoform>
        <id>Q6ZMY3-5</id>
        <name>5</name>
        <sequence type="described" ref="VSP_025491 VSP_025492 VSP_025493"/>
    </isoform>
</comment>
<comment type="disease">
    <text evidence="6">Spermatogenic failure (PubMed:38359823). A male infertility disorder caused by spermatogenesis defects that result in non-obstructive azoospermia (PubMed:38359823). The disease is caused by variants affecting the gene represented in this entry (PubMed:38359823).</text>
</comment>
<comment type="sequence caution" evidence="10">
    <conflict type="erroneous initiation">
        <sequence resource="EMBL-CDS" id="AAH39870"/>
    </conflict>
</comment>
<comment type="sequence caution" evidence="10">
    <conflict type="erroneous initiation">
        <sequence resource="EMBL-CDS" id="BAB71652"/>
    </conflict>
</comment>
<comment type="sequence caution" evidence="10">
    <conflict type="erroneous initiation">
        <sequence resource="EMBL-CDS" id="BAC04981"/>
    </conflict>
</comment>